<organism>
    <name type="scientific">Candida albicans (strain SC5314 / ATCC MYA-2876)</name>
    <name type="common">Yeast</name>
    <dbReference type="NCBI Taxonomy" id="237561"/>
    <lineage>
        <taxon>Eukaryota</taxon>
        <taxon>Fungi</taxon>
        <taxon>Dikarya</taxon>
        <taxon>Ascomycota</taxon>
        <taxon>Saccharomycotina</taxon>
        <taxon>Pichiomycetes</taxon>
        <taxon>Debaryomycetaceae</taxon>
        <taxon>Candida/Lodderomyces clade</taxon>
        <taxon>Candida</taxon>
    </lineage>
</organism>
<protein>
    <recommendedName>
        <fullName>Transcriptional regulatory protein GAT1</fullName>
    </recommendedName>
</protein>
<accession>Q5A432</accession>
<accession>A0A1D8PMF2</accession>
<name>GAT1_CANAL</name>
<proteinExistence type="evidence at transcript level"/>
<feature type="chain" id="PRO_0000422807" description="Transcriptional regulatory protein GAT1">
    <location>
        <begin position="1"/>
        <end position="688"/>
    </location>
</feature>
<feature type="zinc finger region" description="GATA-type" evidence="1">
    <location>
        <begin position="438"/>
        <end position="462"/>
    </location>
</feature>
<feature type="region of interest" description="Disordered" evidence="2">
    <location>
        <begin position="83"/>
        <end position="125"/>
    </location>
</feature>
<feature type="region of interest" description="Disordered" evidence="2">
    <location>
        <begin position="259"/>
        <end position="278"/>
    </location>
</feature>
<feature type="region of interest" description="Disordered" evidence="2">
    <location>
        <begin position="343"/>
        <end position="438"/>
    </location>
</feature>
<feature type="region of interest" description="Disordered" evidence="2">
    <location>
        <begin position="482"/>
        <end position="565"/>
    </location>
</feature>
<feature type="region of interest" description="Disordered" evidence="2">
    <location>
        <begin position="639"/>
        <end position="678"/>
    </location>
</feature>
<feature type="compositionally biased region" description="Low complexity" evidence="2">
    <location>
        <begin position="259"/>
        <end position="271"/>
    </location>
</feature>
<feature type="compositionally biased region" description="Basic and acidic residues" evidence="2">
    <location>
        <begin position="359"/>
        <end position="368"/>
    </location>
</feature>
<feature type="compositionally biased region" description="Polar residues" evidence="2">
    <location>
        <begin position="369"/>
        <end position="379"/>
    </location>
</feature>
<feature type="compositionally biased region" description="Basic residues" evidence="2">
    <location>
        <begin position="382"/>
        <end position="397"/>
    </location>
</feature>
<feature type="compositionally biased region" description="Low complexity" evidence="2">
    <location>
        <begin position="402"/>
        <end position="428"/>
    </location>
</feature>
<feature type="compositionally biased region" description="Low complexity" evidence="2">
    <location>
        <begin position="488"/>
        <end position="510"/>
    </location>
</feature>
<feature type="compositionally biased region" description="Low complexity" evidence="2">
    <location>
        <begin position="529"/>
        <end position="543"/>
    </location>
</feature>
<feature type="compositionally biased region" description="Low complexity" evidence="2">
    <location>
        <begin position="552"/>
        <end position="565"/>
    </location>
</feature>
<feature type="compositionally biased region" description="Low complexity" evidence="2">
    <location>
        <begin position="639"/>
        <end position="654"/>
    </location>
</feature>
<feature type="compositionally biased region" description="Low complexity" evidence="2">
    <location>
        <begin position="662"/>
        <end position="678"/>
    </location>
</feature>
<sequence>MYYRARHSLPYQKRMENLTWRMMYINNKSIFTNTNNAPKEIFEQSLDPEIDDFDYVAHIKKIGQFNQQKTQQQQDHLQSNLDNHNSIFADNTGFSNNNDRGSSGGGMTSISSLSKKRPAPFSPMIQPEKTTIIPTATNTMSQLSQQLNEFNKFNHPSQTSNFNDVNHHMEISTSHIAPTSSAFEFSLDPLAFEGPNQNFQPEPHHDFNTNSFDSMTSSYERPLFDDFLPRDHHNIQSSSVPTSASSFSTIVPKNTQFSTSASITSPTSTFSNQGNNSSNFHRLNSTVSITATPGNLLRQESMVSLPDYANHLRSMSQTPTMNSSNAPFSHSFNDGGSYFMNNFTGITLPSQPSPQPIHFDNKPKDDHFNTSLSVSQQQPSAKKSKRKSTITKSKKKAASPETTITSTGSTITTKSTNSNSTGKGTATGPAASNTGVSCTNCGTKTTPLWRRNPQGQPLCNACGLFLKLHGVVRPLSLKTDVIKKRQRGNNNGSGNSSGTTNNSNNYNNKSISKKNEIDDGDDLNPTSITNNTGLTNNNNSKSPAKSKKKSNFDNNSNSALNNLDKSKLKINTNEITNISETTSNSSSPVINLNHGGRSSGVFGNTPDYLNGITSPAVSLVKSEIDNPHQLNNSNSNGMLMTMHQSSHQSSLSTTFDHEVESNNEGSNSSGVNTSTANNQDWDWLNMNY</sequence>
<reference key="1">
    <citation type="journal article" date="2004" name="Proc. Natl. Acad. Sci. U.S.A.">
        <title>The diploid genome sequence of Candida albicans.</title>
        <authorList>
            <person name="Jones T."/>
            <person name="Federspiel N.A."/>
            <person name="Chibana H."/>
            <person name="Dungan J."/>
            <person name="Kalman S."/>
            <person name="Magee B.B."/>
            <person name="Newport G."/>
            <person name="Thorstenson Y.R."/>
            <person name="Agabian N."/>
            <person name="Magee P.T."/>
            <person name="Davis R.W."/>
            <person name="Scherer S."/>
        </authorList>
    </citation>
    <scope>NUCLEOTIDE SEQUENCE [LARGE SCALE GENOMIC DNA]</scope>
    <source>
        <strain>SC5314 / ATCC MYA-2876</strain>
    </source>
</reference>
<reference key="2">
    <citation type="journal article" date="2007" name="Genome Biol.">
        <title>Assembly of the Candida albicans genome into sixteen supercontigs aligned on the eight chromosomes.</title>
        <authorList>
            <person name="van het Hoog M."/>
            <person name="Rast T.J."/>
            <person name="Martchenko M."/>
            <person name="Grindle S."/>
            <person name="Dignard D."/>
            <person name="Hogues H."/>
            <person name="Cuomo C."/>
            <person name="Berriman M."/>
            <person name="Scherer S."/>
            <person name="Magee B.B."/>
            <person name="Whiteway M."/>
            <person name="Chibana H."/>
            <person name="Nantel A."/>
            <person name="Magee P.T."/>
        </authorList>
    </citation>
    <scope>GENOME REANNOTATION</scope>
    <source>
        <strain>SC5314 / ATCC MYA-2876</strain>
    </source>
</reference>
<reference key="3">
    <citation type="journal article" date="2013" name="Genome Biol.">
        <title>Assembly of a phased diploid Candida albicans genome facilitates allele-specific measurements and provides a simple model for repeat and indel structure.</title>
        <authorList>
            <person name="Muzzey D."/>
            <person name="Schwartz K."/>
            <person name="Weissman J.S."/>
            <person name="Sherlock G."/>
        </authorList>
    </citation>
    <scope>NUCLEOTIDE SEQUENCE [LARGE SCALE GENOMIC DNA]</scope>
    <scope>GENOME REANNOTATION</scope>
    <source>
        <strain>SC5314 / ATCC MYA-2876</strain>
    </source>
</reference>
<reference key="4">
    <citation type="journal article" date="2003" name="Mol. Microbiol.">
        <title>Nitrogen metabolism and virulence of Candida albicans require the GATA-type transcriptional activator encoded by GAT1.</title>
        <authorList>
            <person name="Limjindaporn T."/>
            <person name="Khalaf R.A."/>
            <person name="Fonzi W.A."/>
        </authorList>
    </citation>
    <scope>FUNCTION</scope>
</reference>
<reference key="5">
    <citation type="journal article" date="2007" name="Eukaryot. Cell">
        <title>Control of ammonium permease expression and filamentous growth by the GATA transcription factors GLN3 and GAT1 in Candida albicans.</title>
        <authorList>
            <person name="Dabas N."/>
            <person name="Morschhauser J."/>
        </authorList>
    </citation>
    <scope>FUNCTION</scope>
</reference>
<reference key="6">
    <citation type="journal article" date="2008" name="Fungal Genet. Biol.">
        <title>GLN3 encodes a global regulator of nitrogen metabolism and virulence of C. albicans.</title>
        <authorList>
            <person name="Liao W.L."/>
            <person name="Ramon A.M."/>
            <person name="Fonzi W.A."/>
        </authorList>
    </citation>
    <scope>FUNCTION</scope>
</reference>
<reference key="7">
    <citation type="journal article" date="2008" name="Mol. Microbiol.">
        <title>A transcription factor regulatory cascade controls secreted aspartic protease expression in Candida albicans.</title>
        <authorList>
            <person name="Dabas N."/>
            <person name="Morschhauser J."/>
        </authorList>
    </citation>
    <scope>FUNCTION</scope>
</reference>
<reference key="8">
    <citation type="journal article" date="2009" name="PLoS Pathog.">
        <title>The protein kinase Tor1 regulates adhesin gene expression in Candida albicans.</title>
        <authorList>
            <person name="Bastidas R.J."/>
            <person name="Heitman J."/>
            <person name="Cardenas M.E."/>
        </authorList>
    </citation>
    <scope>INDUCTION</scope>
</reference>
<reference key="9">
    <citation type="journal article" date="2011" name="Microbiology">
        <title>Dur3 is the major urea transporter in Candida albicans and is co-regulated with the urea amidolyase Dur1,2.</title>
        <authorList>
            <person name="Navarathna D.H."/>
            <person name="Das A."/>
            <person name="Morschhauser J."/>
            <person name="Nickerson K.W."/>
            <person name="Roberts D.D."/>
        </authorList>
    </citation>
    <scope>FUNCTION</scope>
</reference>
<reference key="10">
    <citation type="journal article" date="2012" name="Eukaryot. Cell">
        <title>Rhb1 regulates the expression of secreted aspartic protease 2 through the TOR signaling pathway in Candida albicans.</title>
        <authorList>
            <person name="Chen Y.T."/>
            <person name="Lin C.Y."/>
            <person name="Tsai P.W."/>
            <person name="Yang C.Y."/>
            <person name="Hsieh W.P."/>
            <person name="Lan C.Y."/>
        </authorList>
    </citation>
    <scope>FUNCTION</scope>
</reference>
<evidence type="ECO:0000255" key="1">
    <source>
        <dbReference type="PROSITE-ProRule" id="PRU00094"/>
    </source>
</evidence>
<evidence type="ECO:0000256" key="2">
    <source>
        <dbReference type="SAM" id="MobiDB-lite"/>
    </source>
</evidence>
<evidence type="ECO:0000269" key="3">
    <source>
    </source>
</evidence>
<evidence type="ECO:0000269" key="4">
    <source>
    </source>
</evidence>
<evidence type="ECO:0000269" key="5">
    <source>
    </source>
</evidence>
<evidence type="ECO:0000269" key="6">
    <source>
    </source>
</evidence>
<evidence type="ECO:0000269" key="7">
    <source>
    </source>
</evidence>
<evidence type="ECO:0000269" key="8">
    <source>
    </source>
</evidence>
<evidence type="ECO:0000269" key="9">
    <source>
    </source>
</evidence>
<evidence type="ECO:0000305" key="10"/>
<gene>
    <name type="primary">GAT1</name>
    <name type="ordered locus">CAALFM_C405880WA</name>
    <name type="ORF">CaO19.1275</name>
    <name type="ORF">CaO19.8862</name>
</gene>
<keyword id="KW-0479">Metal-binding</keyword>
<keyword id="KW-0539">Nucleus</keyword>
<keyword id="KW-1185">Reference proteome</keyword>
<keyword id="KW-0804">Transcription</keyword>
<keyword id="KW-0805">Transcription regulation</keyword>
<keyword id="KW-0843">Virulence</keyword>
<keyword id="KW-0862">Zinc</keyword>
<keyword id="KW-0863">Zinc-finger</keyword>
<comment type="function">
    <text evidence="3 4 5 6 8 9">Transcriptional regulator of nitrogen utilization required for nitrogen catabolite repression and utilization of isoleucine, tyrosine and tryptophan as nitrogen sources. Controls expression of the MEP2 ammonium permease, the DUR1,2 urea amidolyase, and the transcription factor STP1, which in turn mediates SAP2 expression, a long-known virulence attribute of C.albicans. Influences the filamentation process depending upon the nitrogen sources available. Required for virulence in a mouse systemic infection model.</text>
</comment>
<comment type="subcellular location">
    <subcellularLocation>
        <location evidence="10">Nucleus</location>
    </subcellularLocation>
</comment>
<comment type="induction">
    <text evidence="7">Expression is induced by rapamycine.</text>
</comment>
<dbReference type="EMBL" id="CP017626">
    <property type="protein sequence ID" value="AOW29318.1"/>
    <property type="molecule type" value="Genomic_DNA"/>
</dbReference>
<dbReference type="RefSeq" id="XP_716583.1">
    <property type="nucleotide sequence ID" value="XM_711490.1"/>
</dbReference>
<dbReference type="SMR" id="Q5A432"/>
<dbReference type="STRING" id="237561.Q5A432"/>
<dbReference type="EnsemblFungi" id="C4_05880W_A-T">
    <property type="protein sequence ID" value="C4_05880W_A-T-p1"/>
    <property type="gene ID" value="C4_05880W_A"/>
</dbReference>
<dbReference type="GeneID" id="3641794"/>
<dbReference type="KEGG" id="cal:CAALFM_C405880WA"/>
<dbReference type="CGD" id="CAL0000197994">
    <property type="gene designation" value="GAT1"/>
</dbReference>
<dbReference type="VEuPathDB" id="FungiDB:C4_05880W_A"/>
<dbReference type="eggNOG" id="KOG1601">
    <property type="taxonomic scope" value="Eukaryota"/>
</dbReference>
<dbReference type="HOGENOM" id="CLU_021528_0_0_1"/>
<dbReference type="InParanoid" id="Q5A432"/>
<dbReference type="OrthoDB" id="515401at2759"/>
<dbReference type="PRO" id="PR:Q5A432"/>
<dbReference type="Proteomes" id="UP000000559">
    <property type="component" value="Chromosome 4"/>
</dbReference>
<dbReference type="GO" id="GO:0005634">
    <property type="term" value="C:nucleus"/>
    <property type="evidence" value="ECO:0000318"/>
    <property type="project" value="GO_Central"/>
</dbReference>
<dbReference type="GO" id="GO:0003700">
    <property type="term" value="F:DNA-binding transcription factor activity"/>
    <property type="evidence" value="ECO:0000315"/>
    <property type="project" value="CGD"/>
</dbReference>
<dbReference type="GO" id="GO:0000981">
    <property type="term" value="F:DNA-binding transcription factor activity, RNA polymerase II-specific"/>
    <property type="evidence" value="ECO:0000318"/>
    <property type="project" value="GO_Central"/>
</dbReference>
<dbReference type="GO" id="GO:0000978">
    <property type="term" value="F:RNA polymerase II cis-regulatory region sequence-specific DNA binding"/>
    <property type="evidence" value="ECO:0000318"/>
    <property type="project" value="GO_Central"/>
</dbReference>
<dbReference type="GO" id="GO:0008270">
    <property type="term" value="F:zinc ion binding"/>
    <property type="evidence" value="ECO:0007669"/>
    <property type="project" value="UniProtKB-KW"/>
</dbReference>
<dbReference type="GO" id="GO:0000122">
    <property type="term" value="P:negative regulation of transcription by RNA polymerase II"/>
    <property type="evidence" value="ECO:0000318"/>
    <property type="project" value="GO_Central"/>
</dbReference>
<dbReference type="GO" id="GO:0045944">
    <property type="term" value="P:positive regulation of transcription by RNA polymerase II"/>
    <property type="evidence" value="ECO:0000315"/>
    <property type="project" value="CGD"/>
</dbReference>
<dbReference type="GO" id="GO:0006808">
    <property type="term" value="P:regulation of nitrogen utilization"/>
    <property type="evidence" value="ECO:0000315"/>
    <property type="project" value="CGD"/>
</dbReference>
<dbReference type="CDD" id="cd00202">
    <property type="entry name" value="ZnF_GATA"/>
    <property type="match status" value="1"/>
</dbReference>
<dbReference type="FunFam" id="3.30.50.10:FF:000007">
    <property type="entry name" value="Nitrogen regulatory AreA, N-terminal"/>
    <property type="match status" value="1"/>
</dbReference>
<dbReference type="Gene3D" id="3.30.50.10">
    <property type="entry name" value="Erythroid Transcription Factor GATA-1, subunit A"/>
    <property type="match status" value="1"/>
</dbReference>
<dbReference type="InterPro" id="IPR013860">
    <property type="entry name" value="AreA_GATA"/>
</dbReference>
<dbReference type="InterPro" id="IPR039355">
    <property type="entry name" value="Transcription_factor_GATA"/>
</dbReference>
<dbReference type="InterPro" id="IPR000679">
    <property type="entry name" value="Znf_GATA"/>
</dbReference>
<dbReference type="InterPro" id="IPR013088">
    <property type="entry name" value="Znf_NHR/GATA"/>
</dbReference>
<dbReference type="PANTHER" id="PTHR10071:SF281">
    <property type="entry name" value="BOX A-BINDING FACTOR-RELATED"/>
    <property type="match status" value="1"/>
</dbReference>
<dbReference type="PANTHER" id="PTHR10071">
    <property type="entry name" value="TRANSCRIPTION FACTOR GATA FAMILY MEMBER"/>
    <property type="match status" value="1"/>
</dbReference>
<dbReference type="Pfam" id="PF00320">
    <property type="entry name" value="GATA"/>
    <property type="match status" value="1"/>
</dbReference>
<dbReference type="Pfam" id="PF08550">
    <property type="entry name" value="GATA_AreA"/>
    <property type="match status" value="1"/>
</dbReference>
<dbReference type="PRINTS" id="PR00619">
    <property type="entry name" value="GATAZNFINGER"/>
</dbReference>
<dbReference type="SMART" id="SM00401">
    <property type="entry name" value="ZnF_GATA"/>
    <property type="match status" value="1"/>
</dbReference>
<dbReference type="SUPFAM" id="SSF57716">
    <property type="entry name" value="Glucocorticoid receptor-like (DNA-binding domain)"/>
    <property type="match status" value="1"/>
</dbReference>
<dbReference type="PROSITE" id="PS00344">
    <property type="entry name" value="GATA_ZN_FINGER_1"/>
    <property type="match status" value="1"/>
</dbReference>
<dbReference type="PROSITE" id="PS50114">
    <property type="entry name" value="GATA_ZN_FINGER_2"/>
    <property type="match status" value="1"/>
</dbReference>